<comment type="similarity">
    <text evidence="1">Belongs to the UPF0235 family.</text>
</comment>
<sequence>MNWLTATADGVRLTLHVQPGARRTEVAGLHGDALKIRLAAPPVDGKANACLLAFLARGLGVSRSAVTLKSGDCSRHKVVDIRGITPEAAAGLLPVKE</sequence>
<evidence type="ECO:0000255" key="1">
    <source>
        <dbReference type="HAMAP-Rule" id="MF_00634"/>
    </source>
</evidence>
<reference key="1">
    <citation type="journal article" date="2009" name="PLoS Genet.">
        <title>The complete genome and proteome of Laribacter hongkongensis reveal potential mechanisms for adaptations to different temperatures and habitats.</title>
        <authorList>
            <person name="Woo P.C.Y."/>
            <person name="Lau S.K.P."/>
            <person name="Tse H."/>
            <person name="Teng J.L.L."/>
            <person name="Curreem S.O."/>
            <person name="Tsang A.K.L."/>
            <person name="Fan R.Y.Y."/>
            <person name="Wong G.K.M."/>
            <person name="Huang Y."/>
            <person name="Loman N.J."/>
            <person name="Snyder L.A.S."/>
            <person name="Cai J.J."/>
            <person name="Huang J.-D."/>
            <person name="Mak W."/>
            <person name="Pallen M.J."/>
            <person name="Lok S."/>
            <person name="Yuen K.-Y."/>
        </authorList>
    </citation>
    <scope>NUCLEOTIDE SEQUENCE [LARGE SCALE GENOMIC DNA]</scope>
    <source>
        <strain>HLHK9</strain>
    </source>
</reference>
<feature type="chain" id="PRO_1000147344" description="UPF0235 protein LHK_03181">
    <location>
        <begin position="1"/>
        <end position="97"/>
    </location>
</feature>
<gene>
    <name type="ordered locus">LHK_03181</name>
</gene>
<dbReference type="EMBL" id="CP001154">
    <property type="protein sequence ID" value="ACO76159.1"/>
    <property type="molecule type" value="Genomic_DNA"/>
</dbReference>
<dbReference type="RefSeq" id="WP_012698622.1">
    <property type="nucleotide sequence ID" value="NC_012559.1"/>
</dbReference>
<dbReference type="SMR" id="C1D6C4"/>
<dbReference type="KEGG" id="lhk:LHK_03181"/>
<dbReference type="eggNOG" id="COG1872">
    <property type="taxonomic scope" value="Bacteria"/>
</dbReference>
<dbReference type="HOGENOM" id="CLU_130694_6_0_4"/>
<dbReference type="Proteomes" id="UP000002010">
    <property type="component" value="Chromosome"/>
</dbReference>
<dbReference type="GO" id="GO:0005737">
    <property type="term" value="C:cytoplasm"/>
    <property type="evidence" value="ECO:0007669"/>
    <property type="project" value="TreeGrafter"/>
</dbReference>
<dbReference type="Gene3D" id="3.30.1200.10">
    <property type="entry name" value="YggU-like"/>
    <property type="match status" value="1"/>
</dbReference>
<dbReference type="HAMAP" id="MF_00634">
    <property type="entry name" value="UPF0235"/>
    <property type="match status" value="1"/>
</dbReference>
<dbReference type="InterPro" id="IPR003746">
    <property type="entry name" value="DUF167"/>
</dbReference>
<dbReference type="InterPro" id="IPR036591">
    <property type="entry name" value="YggU-like_sf"/>
</dbReference>
<dbReference type="NCBIfam" id="TIGR00251">
    <property type="entry name" value="DUF167 family protein"/>
    <property type="match status" value="1"/>
</dbReference>
<dbReference type="PANTHER" id="PTHR13420">
    <property type="entry name" value="UPF0235 PROTEIN C15ORF40"/>
    <property type="match status" value="1"/>
</dbReference>
<dbReference type="PANTHER" id="PTHR13420:SF7">
    <property type="entry name" value="UPF0235 PROTEIN C15ORF40"/>
    <property type="match status" value="1"/>
</dbReference>
<dbReference type="Pfam" id="PF02594">
    <property type="entry name" value="DUF167"/>
    <property type="match status" value="1"/>
</dbReference>
<dbReference type="SMART" id="SM01152">
    <property type="entry name" value="DUF167"/>
    <property type="match status" value="1"/>
</dbReference>
<dbReference type="SUPFAM" id="SSF69786">
    <property type="entry name" value="YggU-like"/>
    <property type="match status" value="1"/>
</dbReference>
<accession>C1D6C4</accession>
<name>Y3181_LARHH</name>
<proteinExistence type="inferred from homology"/>
<keyword id="KW-1185">Reference proteome</keyword>
<organism>
    <name type="scientific">Laribacter hongkongensis (strain HLHK9)</name>
    <dbReference type="NCBI Taxonomy" id="557598"/>
    <lineage>
        <taxon>Bacteria</taxon>
        <taxon>Pseudomonadati</taxon>
        <taxon>Pseudomonadota</taxon>
        <taxon>Betaproteobacteria</taxon>
        <taxon>Neisseriales</taxon>
        <taxon>Aquaspirillaceae</taxon>
        <taxon>Laribacter</taxon>
    </lineage>
</organism>
<protein>
    <recommendedName>
        <fullName evidence="1">UPF0235 protein LHK_03181</fullName>
    </recommendedName>
</protein>